<accession>Q2YXE6</accession>
<dbReference type="EC" id="2.3.1.-"/>
<dbReference type="EMBL" id="AJ938182">
    <property type="protein sequence ID" value="CAI80728.1"/>
    <property type="molecule type" value="Genomic_DNA"/>
</dbReference>
<dbReference type="RefSeq" id="WP_001289711.1">
    <property type="nucleotide sequence ID" value="NC_007622.1"/>
</dbReference>
<dbReference type="SMR" id="Q2YXE6"/>
<dbReference type="KEGG" id="sab:SAB1040c"/>
<dbReference type="HOGENOM" id="CLU_136634_0_0_9"/>
<dbReference type="GO" id="GO:0016747">
    <property type="term" value="F:acyltransferase activity, transferring groups other than amino-acyl groups"/>
    <property type="evidence" value="ECO:0007669"/>
    <property type="project" value="UniProtKB-UniRule"/>
</dbReference>
<dbReference type="CDD" id="cd04301">
    <property type="entry name" value="NAT_SF"/>
    <property type="match status" value="1"/>
</dbReference>
<dbReference type="Gene3D" id="3.40.630.30">
    <property type="match status" value="1"/>
</dbReference>
<dbReference type="HAMAP" id="MF_00824">
    <property type="entry name" value="Acetyltransf_YlbP"/>
    <property type="match status" value="1"/>
</dbReference>
<dbReference type="InterPro" id="IPR016181">
    <property type="entry name" value="Acyl_CoA_acyltransferase"/>
</dbReference>
<dbReference type="InterPro" id="IPR000182">
    <property type="entry name" value="GNAT_dom"/>
</dbReference>
<dbReference type="InterPro" id="IPR017274">
    <property type="entry name" value="YlbP"/>
</dbReference>
<dbReference type="NCBIfam" id="NF010241">
    <property type="entry name" value="PRK13688.1"/>
    <property type="match status" value="1"/>
</dbReference>
<dbReference type="PIRSF" id="PIRSF037732">
    <property type="entry name" value="YlbP_prd"/>
    <property type="match status" value="1"/>
</dbReference>
<dbReference type="SUPFAM" id="SSF55729">
    <property type="entry name" value="Acyl-CoA N-acyltransferases (Nat)"/>
    <property type="match status" value="1"/>
</dbReference>
<dbReference type="PROSITE" id="PS51186">
    <property type="entry name" value="GNAT"/>
    <property type="match status" value="1"/>
</dbReference>
<proteinExistence type="inferred from homology"/>
<organism>
    <name type="scientific">Staphylococcus aureus (strain bovine RF122 / ET3-1)</name>
    <dbReference type="NCBI Taxonomy" id="273036"/>
    <lineage>
        <taxon>Bacteria</taxon>
        <taxon>Bacillati</taxon>
        <taxon>Bacillota</taxon>
        <taxon>Bacilli</taxon>
        <taxon>Bacillales</taxon>
        <taxon>Staphylococcaceae</taxon>
        <taxon>Staphylococcus</taxon>
    </lineage>
</organism>
<feature type="chain" id="PRO_0000232481" description="Uncharacterized N-acetyltransferase SAB1040c">
    <location>
        <begin position="1"/>
        <end position="146"/>
    </location>
</feature>
<feature type="domain" description="N-acetyltransferase">
    <location>
        <begin position="7"/>
        <end position="146"/>
    </location>
</feature>
<reference key="1">
    <citation type="journal article" date="2007" name="PLoS ONE">
        <title>Molecular correlates of host specialization in Staphylococcus aureus.</title>
        <authorList>
            <person name="Herron-Olson L."/>
            <person name="Fitzgerald J.R."/>
            <person name="Musser J.M."/>
            <person name="Kapur V."/>
        </authorList>
    </citation>
    <scope>NUCLEOTIDE SEQUENCE [LARGE SCALE GENOMIC DNA]</scope>
    <source>
        <strain>bovine RF122 / ET3-1</strain>
    </source>
</reference>
<protein>
    <recommendedName>
        <fullName>Uncharacterized N-acetyltransferase SAB1040c</fullName>
        <ecNumber>2.3.1.-</ecNumber>
    </recommendedName>
</protein>
<name>Y1040_STAAB</name>
<keyword id="KW-0012">Acyltransferase</keyword>
<keyword id="KW-0808">Transferase</keyword>
<sequence length="146" mass="17002">MSEIKRLEINYKTDELFENFRAFGNKDLYMVNELNGQMIDASSDSPFYGIFVGDQLGARMALLKKGDVEEIYFPDFEDYILLWKLEVLPKYQNRGYASELIDFAKSFNMPIKAIGRNDSKDFFLHHGFTDVEAKNIEGHDVLLWKP</sequence>
<gene>
    <name type="ordered locus">SAB1040c</name>
</gene>